<dbReference type="EMBL" id="M35027">
    <property type="protein sequence ID" value="AAA48172.1"/>
    <property type="molecule type" value="Genomic_DNA"/>
</dbReference>
<dbReference type="PIR" id="G42521">
    <property type="entry name" value="G42521"/>
</dbReference>
<dbReference type="SMR" id="P21064"/>
<dbReference type="Proteomes" id="UP000008269">
    <property type="component" value="Segment"/>
</dbReference>
<dbReference type="GO" id="GO:0005576">
    <property type="term" value="C:extracellular region"/>
    <property type="evidence" value="ECO:0007669"/>
    <property type="project" value="UniProtKB-SubCell"/>
</dbReference>
<dbReference type="Gene3D" id="2.60.240.10">
    <property type="entry name" value="Major secreted virus protein"/>
    <property type="match status" value="1"/>
</dbReference>
<dbReference type="InterPro" id="IPR003184">
    <property type="entry name" value="Orthopox_35kDa"/>
</dbReference>
<dbReference type="InterPro" id="IPR036540">
    <property type="entry name" value="Pox_vCCI-like_sf"/>
</dbReference>
<dbReference type="Pfam" id="PF02250">
    <property type="entry name" value="Orthopox_35kD"/>
    <property type="match status" value="1"/>
</dbReference>
<dbReference type="SUPFAM" id="SSF49889">
    <property type="entry name" value="Soluble secreted chemokine inhibitor, VCCI"/>
    <property type="match status" value="1"/>
</dbReference>
<evidence type="ECO:0000250" key="1">
    <source>
        <dbReference type="UniProtKB" id="P24766"/>
    </source>
</evidence>
<evidence type="ECO:0000255" key="2"/>
<evidence type="ECO:0000305" key="3"/>
<gene>
    <name type="primary">OPG170</name>
    <name type="ORF">A41L</name>
</gene>
<name>PG170_VACCC</name>
<sequence length="219" mass="25093">MYSLLFIILMCIPFSFQTVYDDKSVCDSDNKEYMGIEVYVEATLDEPLRQTTCESEIHKYGASVSNGGLNISVDLLNCFLNFHTVGVYTNRDTVYAKFASLDPWTTEPINSMTHDDLVKLTEECIVDIYLKCEVDKTKDFMKTNGNRLKPRDFKTVPPSDVGSMIELQSDYCVNDVTAYVKIYDECGNIKQHSIPTLRDYFTTKNGQPRKILKKKFDNC</sequence>
<accession>P21064</accession>
<organism>
    <name type="scientific">Vaccinia virus (strain Copenhagen)</name>
    <name type="common">VACV</name>
    <dbReference type="NCBI Taxonomy" id="10249"/>
    <lineage>
        <taxon>Viruses</taxon>
        <taxon>Varidnaviria</taxon>
        <taxon>Bamfordvirae</taxon>
        <taxon>Nucleocytoviricota</taxon>
        <taxon>Pokkesviricetes</taxon>
        <taxon>Chitovirales</taxon>
        <taxon>Poxviridae</taxon>
        <taxon>Chordopoxvirinae</taxon>
        <taxon>Orthopoxvirus</taxon>
        <taxon>Vaccinia virus</taxon>
    </lineage>
</organism>
<proteinExistence type="evidence at transcript level"/>
<protein>
    <recommendedName>
        <fullName>Protein OPG170</fullName>
    </recommendedName>
</protein>
<comment type="function">
    <text evidence="1">May interact with several cellular chemokines to interfere with chemokine-glycosaminoglycan (GAG) interactions at the cell surface to alter chemotaxis of nearby responsive cells.</text>
</comment>
<comment type="subcellular location">
    <subcellularLocation>
        <location evidence="1">Secreted</location>
    </subcellularLocation>
</comment>
<comment type="induction">
    <text>Expressed in the early phase of the viral replicative cycle.</text>
</comment>
<comment type="similarity">
    <text evidence="3">Belongs to the orthopoxvirus OPG170 family.</text>
</comment>
<reference key="1">
    <citation type="journal article" date="1990" name="Virology">
        <title>The complete DNA sequence of vaccinia virus.</title>
        <authorList>
            <person name="Goebel S.J."/>
            <person name="Johnson G.P."/>
            <person name="Perkus M.E."/>
            <person name="Davis S.W."/>
            <person name="Winslow J.P."/>
            <person name="Paoletti E."/>
        </authorList>
    </citation>
    <scope>NUCLEOTIDE SEQUENCE [GENOMIC DNA]</scope>
</reference>
<reference key="2">
    <citation type="journal article" date="1990" name="Virology">
        <title>Appendix to 'The complete DNA sequence of vaccinia virus'.</title>
        <authorList>
            <person name="Goebel S.J."/>
            <person name="Johnson G.P."/>
            <person name="Perkus M.E."/>
            <person name="Davis S.W."/>
            <person name="Winslow J.P."/>
            <person name="Paoletti E."/>
        </authorList>
    </citation>
    <scope>NUCLEOTIDE SEQUENCE [LARGE SCALE GENOMIC DNA]</scope>
</reference>
<feature type="signal peptide" evidence="2">
    <location>
        <begin position="1"/>
        <end position="16"/>
    </location>
</feature>
<feature type="chain" id="PRO_0000040602" description="Protein OPG170">
    <location>
        <begin position="17"/>
        <end position="219"/>
    </location>
</feature>
<feature type="glycosylation site" description="N-linked (GlcNAc...) asparagine; by host" evidence="2">
    <location>
        <position position="70"/>
    </location>
</feature>
<organismHost>
    <name type="scientific">Homo sapiens</name>
    <name type="common">Human</name>
    <dbReference type="NCBI Taxonomy" id="9606"/>
</organismHost>
<keyword id="KW-0244">Early protein</keyword>
<keyword id="KW-0325">Glycoprotein</keyword>
<keyword id="KW-0945">Host-virus interaction</keyword>
<keyword id="KW-1086">Inhibition of host chemokines by virus</keyword>
<keyword id="KW-1185">Reference proteome</keyword>
<keyword id="KW-0964">Secreted</keyword>
<keyword id="KW-0732">Signal</keyword>
<keyword id="KW-0899">Viral immunoevasion</keyword>